<evidence type="ECO:0000250" key="1"/>
<evidence type="ECO:0000255" key="2">
    <source>
        <dbReference type="PROSITE-ProRule" id="PRU01024"/>
    </source>
</evidence>
<sequence>MFTKYKFLYFLFDSTFFKYWYVIPMAMKIYIEGFDEKGYGVGNNIHVPFAYPGDIVEVKVRRKGKKKIGEIVKIIEESPYRTSNKYCAHLGKCGGCLWGLMDYQYQLEFKKKVIENLFGYDKDIIPSPKTIYYRNRMDYPIYNKVSLKEPGKWYGYIPIKECKMLSKEAEIIINEFNKFIEKYKIPSWDTVKHTGFLRYLVIREGKFTKERMIHIITYKRKKFEELWDFIENIKDLVTSVYWGIREDLGDVSISEKLYHYYGSKFLRERILDIEYYISPNSFFQTNSYQAVNLVKIVKEFLEPSENDVVLDLYSGVGLFSLQIANEVKKVIGIEIVEEAVEMAKLNASINNIDAEFIASPVEKAPIIKANKIIVDPPRAGLTNKAIEYIEKINPDTIVYVSCNPYTQKRDINKLKGYKIIDMQPLDMFPNTPHIENVILMKKSRTTD</sequence>
<gene>
    <name type="ordered locus">NEQ053</name>
</gene>
<protein>
    <recommendedName>
        <fullName>Uncharacterized RNA methyltransferase NEQ053</fullName>
        <ecNumber>2.1.1.-</ecNumber>
    </recommendedName>
</protein>
<keyword id="KW-0004">4Fe-4S</keyword>
<keyword id="KW-0408">Iron</keyword>
<keyword id="KW-0411">Iron-sulfur</keyword>
<keyword id="KW-0479">Metal-binding</keyword>
<keyword id="KW-0489">Methyltransferase</keyword>
<keyword id="KW-1185">Reference proteome</keyword>
<keyword id="KW-0949">S-adenosyl-L-methionine</keyword>
<keyword id="KW-0808">Transferase</keyword>
<name>Y053_NANEQ</name>
<feature type="chain" id="PRO_0000162052" description="Uncharacterized RNA methyltransferase NEQ053">
    <location>
        <begin position="1"/>
        <end position="447"/>
    </location>
</feature>
<feature type="active site" description="Nucleophile" evidence="2">
    <location>
        <position position="402"/>
    </location>
</feature>
<feature type="binding site" evidence="1">
    <location>
        <position position="87"/>
    </location>
    <ligand>
        <name>[4Fe-4S] cluster</name>
        <dbReference type="ChEBI" id="CHEBI:49883"/>
    </ligand>
</feature>
<feature type="binding site" evidence="1">
    <location>
        <position position="93"/>
    </location>
    <ligand>
        <name>[4Fe-4S] cluster</name>
        <dbReference type="ChEBI" id="CHEBI:49883"/>
    </ligand>
</feature>
<feature type="binding site" evidence="1">
    <location>
        <position position="96"/>
    </location>
    <ligand>
        <name>[4Fe-4S] cluster</name>
        <dbReference type="ChEBI" id="CHEBI:49883"/>
    </ligand>
</feature>
<feature type="binding site" evidence="1">
    <location>
        <position position="162"/>
    </location>
    <ligand>
        <name>[4Fe-4S] cluster</name>
        <dbReference type="ChEBI" id="CHEBI:49883"/>
    </ligand>
</feature>
<feature type="binding site" evidence="2">
    <location>
        <position position="284"/>
    </location>
    <ligand>
        <name>S-adenosyl-L-methionine</name>
        <dbReference type="ChEBI" id="CHEBI:59789"/>
    </ligand>
</feature>
<feature type="binding site" evidence="2">
    <location>
        <position position="313"/>
    </location>
    <ligand>
        <name>S-adenosyl-L-methionine</name>
        <dbReference type="ChEBI" id="CHEBI:59789"/>
    </ligand>
</feature>
<feature type="binding site" evidence="2">
    <location>
        <position position="334"/>
    </location>
    <ligand>
        <name>S-adenosyl-L-methionine</name>
        <dbReference type="ChEBI" id="CHEBI:59789"/>
    </ligand>
</feature>
<feature type="binding site" evidence="2">
    <location>
        <position position="375"/>
    </location>
    <ligand>
        <name>S-adenosyl-L-methionine</name>
        <dbReference type="ChEBI" id="CHEBI:59789"/>
    </ligand>
</feature>
<comment type="similarity">
    <text evidence="2">Belongs to the class I-like SAM-binding methyltransferase superfamily. RNA M5U methyltransferase family.</text>
</comment>
<organism>
    <name type="scientific">Nanoarchaeum equitans (strain Kin4-M)</name>
    <dbReference type="NCBI Taxonomy" id="228908"/>
    <lineage>
        <taxon>Archaea</taxon>
        <taxon>Nanobdellota</taxon>
        <taxon>Candidatus Nanoarchaeia</taxon>
        <taxon>Nanoarchaeales</taxon>
        <taxon>Nanoarchaeaceae</taxon>
        <taxon>Nanoarchaeum</taxon>
    </lineage>
</organism>
<accession>Q74N58</accession>
<proteinExistence type="inferred from homology"/>
<dbReference type="EC" id="2.1.1.-"/>
<dbReference type="EMBL" id="AE017199">
    <property type="protein sequence ID" value="AAR38908.1"/>
    <property type="molecule type" value="Genomic_DNA"/>
</dbReference>
<dbReference type="SMR" id="Q74N58"/>
<dbReference type="STRING" id="228908.NEQ053"/>
<dbReference type="EnsemblBacteria" id="AAR38908">
    <property type="protein sequence ID" value="AAR38908"/>
    <property type="gene ID" value="NEQ053"/>
</dbReference>
<dbReference type="KEGG" id="neq:NEQ053"/>
<dbReference type="PATRIC" id="fig|228908.8.peg.53"/>
<dbReference type="HOGENOM" id="CLU_014689_8_1_2"/>
<dbReference type="BioCyc" id="NEQU228908:GJB6-57-MONOMER"/>
<dbReference type="Proteomes" id="UP000000578">
    <property type="component" value="Chromosome"/>
</dbReference>
<dbReference type="GO" id="GO:0051539">
    <property type="term" value="F:4 iron, 4 sulfur cluster binding"/>
    <property type="evidence" value="ECO:0007669"/>
    <property type="project" value="UniProtKB-KW"/>
</dbReference>
<dbReference type="GO" id="GO:0046872">
    <property type="term" value="F:metal ion binding"/>
    <property type="evidence" value="ECO:0007669"/>
    <property type="project" value="UniProtKB-KW"/>
</dbReference>
<dbReference type="GO" id="GO:0008173">
    <property type="term" value="F:RNA methyltransferase activity"/>
    <property type="evidence" value="ECO:0007669"/>
    <property type="project" value="InterPro"/>
</dbReference>
<dbReference type="GO" id="GO:0032259">
    <property type="term" value="P:methylation"/>
    <property type="evidence" value="ECO:0007669"/>
    <property type="project" value="UniProtKB-KW"/>
</dbReference>
<dbReference type="GO" id="GO:0006396">
    <property type="term" value="P:RNA processing"/>
    <property type="evidence" value="ECO:0007669"/>
    <property type="project" value="InterPro"/>
</dbReference>
<dbReference type="CDD" id="cd02440">
    <property type="entry name" value="AdoMet_MTases"/>
    <property type="match status" value="1"/>
</dbReference>
<dbReference type="FunFam" id="3.40.50.150:FF:000009">
    <property type="entry name" value="23S rRNA (Uracil(1939)-C(5))-methyltransferase RlmD"/>
    <property type="match status" value="1"/>
</dbReference>
<dbReference type="Gene3D" id="2.40.50.1070">
    <property type="match status" value="1"/>
</dbReference>
<dbReference type="Gene3D" id="2.40.50.140">
    <property type="entry name" value="Nucleic acid-binding proteins"/>
    <property type="match status" value="1"/>
</dbReference>
<dbReference type="Gene3D" id="3.40.50.150">
    <property type="entry name" value="Vaccinia Virus protein VP39"/>
    <property type="match status" value="1"/>
</dbReference>
<dbReference type="InterPro" id="IPR030390">
    <property type="entry name" value="MeTrfase_TrmA_AS"/>
</dbReference>
<dbReference type="InterPro" id="IPR012340">
    <property type="entry name" value="NA-bd_OB-fold"/>
</dbReference>
<dbReference type="InterPro" id="IPR029063">
    <property type="entry name" value="SAM-dependent_MTases_sf"/>
</dbReference>
<dbReference type="InterPro" id="IPR010280">
    <property type="entry name" value="U5_MeTrfase_fam"/>
</dbReference>
<dbReference type="NCBIfam" id="TIGR00479">
    <property type="entry name" value="rumA"/>
    <property type="match status" value="1"/>
</dbReference>
<dbReference type="PANTHER" id="PTHR11061">
    <property type="entry name" value="RNA M5U METHYLTRANSFERASE"/>
    <property type="match status" value="1"/>
</dbReference>
<dbReference type="PANTHER" id="PTHR11061:SF30">
    <property type="entry name" value="TRNA (URACIL(54)-C(5))-METHYLTRANSFERASE"/>
    <property type="match status" value="1"/>
</dbReference>
<dbReference type="Pfam" id="PF05958">
    <property type="entry name" value="tRNA_U5-meth_tr"/>
    <property type="match status" value="2"/>
</dbReference>
<dbReference type="SUPFAM" id="SSF53335">
    <property type="entry name" value="S-adenosyl-L-methionine-dependent methyltransferases"/>
    <property type="match status" value="1"/>
</dbReference>
<dbReference type="PROSITE" id="PS51687">
    <property type="entry name" value="SAM_MT_RNA_M5U"/>
    <property type="match status" value="1"/>
</dbReference>
<dbReference type="PROSITE" id="PS01230">
    <property type="entry name" value="TRMA_1"/>
    <property type="match status" value="1"/>
</dbReference>
<reference key="1">
    <citation type="journal article" date="2003" name="Proc. Natl. Acad. Sci. U.S.A.">
        <title>The genome of Nanoarchaeum equitans: insights into early archaeal evolution and derived parasitism.</title>
        <authorList>
            <person name="Waters E."/>
            <person name="Hohn M.J."/>
            <person name="Ahel I."/>
            <person name="Graham D.E."/>
            <person name="Adams M.D."/>
            <person name="Barnstead M."/>
            <person name="Beeson K.Y."/>
            <person name="Bibbs L."/>
            <person name="Bolanos R."/>
            <person name="Keller M."/>
            <person name="Kretz K."/>
            <person name="Lin X."/>
            <person name="Mathur E."/>
            <person name="Ni J."/>
            <person name="Podar M."/>
            <person name="Richardson T."/>
            <person name="Sutton G.G."/>
            <person name="Simon M."/>
            <person name="Soell D."/>
            <person name="Stetter K.O."/>
            <person name="Short J.M."/>
            <person name="Noorderwier M."/>
        </authorList>
    </citation>
    <scope>NUCLEOTIDE SEQUENCE [LARGE SCALE GENOMIC DNA]</scope>
    <source>
        <strain>Kin4-M</strain>
    </source>
</reference>